<dbReference type="EC" id="1.14.11.-" evidence="12"/>
<dbReference type="EMBL" id="AY723749">
    <property type="protein sequence ID" value="AAV68710.1"/>
    <property type="molecule type" value="Genomic_DNA"/>
</dbReference>
<dbReference type="SMR" id="Q5MNH9"/>
<dbReference type="GO" id="GO:0051213">
    <property type="term" value="F:dioxygenase activity"/>
    <property type="evidence" value="ECO:0007669"/>
    <property type="project" value="UniProtKB-KW"/>
</dbReference>
<dbReference type="GO" id="GO:0046872">
    <property type="term" value="F:metal ion binding"/>
    <property type="evidence" value="ECO:0007669"/>
    <property type="project" value="UniProtKB-KW"/>
</dbReference>
<dbReference type="GO" id="GO:0009820">
    <property type="term" value="P:alkaloid metabolic process"/>
    <property type="evidence" value="ECO:0007669"/>
    <property type="project" value="UniProtKB-KW"/>
</dbReference>
<dbReference type="Gene3D" id="2.60.120.620">
    <property type="entry name" value="q2cbj1_9rhob like domain"/>
    <property type="match status" value="1"/>
</dbReference>
<dbReference type="InterPro" id="IPR008775">
    <property type="entry name" value="Phytyl_CoA_dOase-like"/>
</dbReference>
<dbReference type="PANTHER" id="PTHR20883:SF48">
    <property type="entry name" value="ECTOINE DIOXYGENASE"/>
    <property type="match status" value="1"/>
</dbReference>
<dbReference type="PANTHER" id="PTHR20883">
    <property type="entry name" value="PHYTANOYL-COA DIOXYGENASE DOMAIN CONTAINING 1"/>
    <property type="match status" value="1"/>
</dbReference>
<dbReference type="Pfam" id="PF05721">
    <property type="entry name" value="PhyH"/>
    <property type="match status" value="1"/>
</dbReference>
<dbReference type="SUPFAM" id="SSF51197">
    <property type="entry name" value="Clavaminate synthase-like"/>
    <property type="match status" value="1"/>
</dbReference>
<accession>Q5MNH9</accession>
<name>LOLE1_EPIUN</name>
<feature type="chain" id="PRO_0000444349" description="Dioxygenase lolE1">
    <location>
        <begin position="1"/>
        <end position="256"/>
    </location>
</feature>
<feature type="binding site" evidence="1">
    <location>
        <position position="125"/>
    </location>
    <ligand>
        <name>Fe cation</name>
        <dbReference type="ChEBI" id="CHEBI:24875"/>
    </ligand>
</feature>
<feature type="binding site" evidence="1">
    <location>
        <position position="127"/>
    </location>
    <ligand>
        <name>Fe cation</name>
        <dbReference type="ChEBI" id="CHEBI:24875"/>
    </ligand>
</feature>
<feature type="binding site" evidence="1">
    <location>
        <position position="203"/>
    </location>
    <ligand>
        <name>Fe cation</name>
        <dbReference type="ChEBI" id="CHEBI:24875"/>
    </ligand>
</feature>
<proteinExistence type="evidence at transcript level"/>
<keyword id="KW-0017">Alkaloid metabolism</keyword>
<keyword id="KW-0223">Dioxygenase</keyword>
<keyword id="KW-0408">Iron</keyword>
<keyword id="KW-0479">Metal-binding</keyword>
<keyword id="KW-0560">Oxidoreductase</keyword>
<sequence length="256" mass="28752">MTAASSPHPGVSAEDIEFYQANGYLRLPQEAHGLFDDLAKLQAWVAEISQWGLETGKWRHYYETTNGKHLLWGTEKLMEYHAPMRDLIAGEAPLTLLKSLTGKDMVVFKDEIGWKLPGGKGAVPHLDRPAYSMFAPEFIEIMIAVDAHTVENGCLQFVPGSHKEAVPISADGRIASAWLEGKEFIPMVLDPGDVLIFNESMAHRLDPNKTDQRRAAVFGTYHFDRSQPDLRDKFYAHRLIHSPPENAWVETVEAQT</sequence>
<reference key="1">
    <citation type="journal article" date="2005" name="Genetics">
        <title>Gene clusters for insecticidal loline alkaloids in the grass-endophytic fungus Neotyphodium uncinatum.</title>
        <authorList>
            <person name="Spiering M.J."/>
            <person name="Moon C.D."/>
            <person name="Wilkinson H.H."/>
            <person name="Schardl C.L."/>
        </authorList>
    </citation>
    <scope>NUCLEOTIDE SEQUENCE [GENOMIC DNA]</scope>
    <scope>INDUCTION</scope>
    <scope>FUNCTION</scope>
    <source>
        <strain>CBS 102646</strain>
    </source>
</reference>
<reference key="2">
    <citation type="journal article" date="2005" name="ChemBioChem">
        <title>Biosynthetic precursors of fungal pyrrolizidines, the loline alkaloids.</title>
        <authorList>
            <person name="Blankenship J.D."/>
            <person name="Houseknecht J.B."/>
            <person name="Pal S."/>
            <person name="Bush L.P."/>
            <person name="Grossman R.B."/>
            <person name="Schardl C.L."/>
        </authorList>
    </citation>
    <scope>FUNCTION</scope>
</reference>
<reference key="3">
    <citation type="journal article" date="2006" name="ChemBioChem">
        <title>On the sequence of bond formation in loline alkaloid biosynthesis.</title>
        <authorList>
            <person name="Faulkner J.R."/>
            <person name="Hussaini S.R."/>
            <person name="Blankenship J.D."/>
            <person name="Pal S."/>
            <person name="Branan B.M."/>
            <person name="Grossman R.B."/>
            <person name="Schardl C.L."/>
        </authorList>
    </citation>
    <scope>FUNCTION</scope>
</reference>
<reference key="4">
    <citation type="journal article" date="2008" name="Fungal Genet. Biol.">
        <title>Role of the LolP cytochrome P450 monooxygenase in loline alkaloid biosynthesis.</title>
        <authorList>
            <person name="Spiering M.J."/>
            <person name="Faulkner J.R."/>
            <person name="Zhang D.X."/>
            <person name="Machado C."/>
            <person name="Grossman R.B."/>
            <person name="Schardl C.L."/>
        </authorList>
    </citation>
    <scope>FUNCTION</scope>
    <source>
        <strain>CBS 102646</strain>
    </source>
</reference>
<reference key="5">
    <citation type="journal article" date="2014" name="Phytochemistry">
        <title>Ether bridge formation in loline alkaloid biosynthesis.</title>
        <authorList>
            <person name="Pan J."/>
            <person name="Bhardwaj M."/>
            <person name="Faulkner J.R."/>
            <person name="Nagabhyru P."/>
            <person name="Charlton N.D."/>
            <person name="Higashi R.M."/>
            <person name="Miller A.F."/>
            <person name="Young C.A."/>
            <person name="Grossman R.B."/>
            <person name="Schardl C.L."/>
        </authorList>
    </citation>
    <scope>FUNCTION</scope>
</reference>
<reference key="6">
    <citation type="journal article" date="2014" name="PLoS ONE">
        <title>Enzymes from fungal and plant origin required for chemical diversification of insecticidal loline alkaloids in grass-Epichloe symbiota.</title>
        <authorList>
            <person name="Pan J."/>
            <person name="Bhardwaj M."/>
            <person name="Nagabhyru P."/>
            <person name="Grossman R.B."/>
            <person name="Schardl C.L."/>
        </authorList>
    </citation>
    <scope>FUNCTION</scope>
    <scope>BIOTECHNOLOGY</scope>
</reference>
<reference key="7">
    <citation type="journal article" date="2018" name="Biochemistry">
        <title>Installation of the ether bridge of lolines by the iron- and 2-oxoglutarate-dependent oxygenase, lolO: regio- and stereochemistry of sequential hydroxylation and oxacyclization reactions.</title>
        <authorList>
            <person name="Pan J."/>
            <person name="Bhardwaj M."/>
            <person name="Zhang B."/>
            <person name="Chang W.C."/>
            <person name="Schardl C.L."/>
            <person name="Krebs C."/>
            <person name="Grossman R.B."/>
            <person name="Bollinger J.M. Jr."/>
        </authorList>
    </citation>
    <scope>FUNCTION</scope>
</reference>
<comment type="function">
    <text evidence="3 4 5 6 7 8 9">Dioxygenase; part of the gene cluster that mediates the biosynthesis of loline alkaloids, potent insecticidal agents composed of a pyrrolizidine ring system and an uncommon ether bridge linking carbons 2 and 7 (PubMed:15654104). Lolines are structurally differentiated by the various modifications of the L-amino group and include norloline, loline, N-methylloline, N-acetylloline, N-acetylnorloline, and N-formylloline (PubMed:15861432, PubMed:25531527). The first committed step is the condensation of O-acetyl-L-homoserine (derived from L-aspartic acid) and L-proline, probably catalyzed by the gamma-type pyridoxal 5'-phosphate(PLP)-dependent enzyme lolC, to give the diamino diacid, NACPP (PubMed:15861432, PubMed:16755627). Ensuing cyclization, decarboxylation, and acetylation steps yield 1-exo-acetamidopyrrolizidine (AcAP) (PubMed:24374065). LolO is required for installation of the ether bridge upon the pathway intermediate, 1-exo-acetamidopyrrolizidine (AcAP) (PubMed:29537853). In sequential 2-oxoglutarate- and O(2)-consuming steps, lolO removes hydrogens from C2 and C7 of AcAP to form both carbon-oxygen bonds in N-acetylnorloline (NANL), the precursor to all other lolines (PubMed:24374065, PubMed:29537853). The enzymes lolD, lolE, lolF and lolT have also been proposed to be involved in the ether-bridge installation (PubMed:15654104). Further processing of the exocyclic moiety of NANL by fungal N-acetamidase (LolN), methyltransferase (LolM), and cytochrome P450 (LolP) enzymes, with occasional involvement of a plant acetyltransferase, generates the other known lolines (PubMed:18655839, PubMed:25531527). LolN transforms NANL to norlonine which is monomethylated and dimethylated to respectively lonine and N-methyllonine (NML) by lolM (PubMed:25531527). LolP catalyzes hydroxylation of the methyl group in N-methylloline (NML) and further oxygenation to N-formylloline (NFL) (PubMed:18655839). A plant acetyltransferase is responsible for the acetylation of loline to form N-acetylloline (NAL) (PubMed:25531527). LolA might interact with aspartate kinase to prevent feedback inhibition of its activity by these end products and thereby promote production of L-homoserine from L-aspartate (PubMed:15654104).</text>
</comment>
<comment type="cofactor">
    <cofactor evidence="1">
        <name>Fe cation</name>
        <dbReference type="ChEBI" id="CHEBI:24875"/>
    </cofactor>
</comment>
<comment type="pathway">
    <text evidence="12">Alkaloid biosynthesis.</text>
</comment>
<comment type="subunit">
    <text evidence="2">Homodimer.</text>
</comment>
<comment type="induction">
    <text evidence="3">Expression is induced in loline alkaloid-producing cultures as well as in planta (PubMed:15654104).</text>
</comment>
<comment type="biotechnology">
    <text evidence="13">Loline alkaloids show broad-spectrum anti-insect activity, and different lolines may have different biological activities (PubMed:25531527). In vitro tests of NFL, NAL, NML, and semisynthetic loline derivatives with long carbon-chain acylations on the 1-amine have shown that many are effective against both fall armyworm larvae and European corn borer larvae, but the effects seem to differ depending on the modifications (PubMed:25531527). N-Formylloline reduces the weight gain of fall armyworms by deterring feeding, and does not significantly affect corn borers (PubMed:25531527). In contrast, NAL reduces the weight gain of corn borer larvae without changing larval feeding behavior, indicating that its effect is due to metabolic toxicity. N-formylloline, NAL, and NML are almost as potent as nicotine in insecticidal activity against green bugs (PubMed:25531527).</text>
</comment>
<comment type="similarity">
    <text evidence="11">Belongs to the PhyH family.</text>
</comment>
<organism>
    <name type="scientific">Epichloe uncinata</name>
    <name type="common">Endophyte fungus</name>
    <name type="synonym">Neotyphodium uncinatum</name>
    <dbReference type="NCBI Taxonomy" id="5050"/>
    <lineage>
        <taxon>Eukaryota</taxon>
        <taxon>Fungi</taxon>
        <taxon>Dikarya</taxon>
        <taxon>Ascomycota</taxon>
        <taxon>Pezizomycotina</taxon>
        <taxon>Sordariomycetes</taxon>
        <taxon>Hypocreomycetidae</taxon>
        <taxon>Hypocreales</taxon>
        <taxon>Clavicipitaceae</taxon>
        <taxon>Epichloe</taxon>
    </lineage>
</organism>
<protein>
    <recommendedName>
        <fullName evidence="10">Dioxygenase lolE1</fullName>
        <ecNumber evidence="12">1.14.11.-</ecNumber>
    </recommendedName>
    <alternativeName>
        <fullName evidence="10">Loline biosynthesis cluster 1 protein E</fullName>
    </alternativeName>
</protein>
<evidence type="ECO:0000250" key="1">
    <source>
        <dbReference type="UniProtKB" id="G8GV69"/>
    </source>
</evidence>
<evidence type="ECO:0000250" key="2">
    <source>
        <dbReference type="UniProtKB" id="Q4WAW9"/>
    </source>
</evidence>
<evidence type="ECO:0000269" key="3">
    <source>
    </source>
</evidence>
<evidence type="ECO:0000269" key="4">
    <source>
    </source>
</evidence>
<evidence type="ECO:0000269" key="5">
    <source>
    </source>
</evidence>
<evidence type="ECO:0000269" key="6">
    <source>
    </source>
</evidence>
<evidence type="ECO:0000269" key="7">
    <source>
    </source>
</evidence>
<evidence type="ECO:0000269" key="8">
    <source>
    </source>
</evidence>
<evidence type="ECO:0000269" key="9">
    <source>
    </source>
</evidence>
<evidence type="ECO:0000303" key="10">
    <source>
    </source>
</evidence>
<evidence type="ECO:0000305" key="11"/>
<evidence type="ECO:0000305" key="12">
    <source>
    </source>
</evidence>
<evidence type="ECO:0000305" key="13">
    <source>
    </source>
</evidence>
<gene>
    <name evidence="10" type="primary">lolE1</name>
    <name evidence="10" type="synonym">lolE</name>
</gene>